<dbReference type="EMBL" id="AE003849">
    <property type="protein sequence ID" value="AAF85431.1"/>
    <property type="molecule type" value="Genomic_DNA"/>
</dbReference>
<dbReference type="PIR" id="F82533">
    <property type="entry name" value="F82533"/>
</dbReference>
<dbReference type="RefSeq" id="WP_010895050.1">
    <property type="nucleotide sequence ID" value="NC_002488.3"/>
</dbReference>
<dbReference type="SMR" id="Q9PA85"/>
<dbReference type="STRING" id="160492.XF_2634"/>
<dbReference type="KEGG" id="xfa:XF_2634"/>
<dbReference type="eggNOG" id="COG0222">
    <property type="taxonomic scope" value="Bacteria"/>
</dbReference>
<dbReference type="HOGENOM" id="CLU_086499_3_2_6"/>
<dbReference type="Proteomes" id="UP000000812">
    <property type="component" value="Chromosome"/>
</dbReference>
<dbReference type="GO" id="GO:0022625">
    <property type="term" value="C:cytosolic large ribosomal subunit"/>
    <property type="evidence" value="ECO:0007669"/>
    <property type="project" value="TreeGrafter"/>
</dbReference>
<dbReference type="GO" id="GO:0003729">
    <property type="term" value="F:mRNA binding"/>
    <property type="evidence" value="ECO:0007669"/>
    <property type="project" value="TreeGrafter"/>
</dbReference>
<dbReference type="GO" id="GO:0003735">
    <property type="term" value="F:structural constituent of ribosome"/>
    <property type="evidence" value="ECO:0007669"/>
    <property type="project" value="InterPro"/>
</dbReference>
<dbReference type="GO" id="GO:0006412">
    <property type="term" value="P:translation"/>
    <property type="evidence" value="ECO:0007669"/>
    <property type="project" value="UniProtKB-UniRule"/>
</dbReference>
<dbReference type="CDD" id="cd00387">
    <property type="entry name" value="Ribosomal_L7_L12"/>
    <property type="match status" value="1"/>
</dbReference>
<dbReference type="FunFam" id="3.30.1390.10:FF:000001">
    <property type="entry name" value="50S ribosomal protein L7/L12"/>
    <property type="match status" value="1"/>
</dbReference>
<dbReference type="Gene3D" id="3.30.1390.10">
    <property type="match status" value="1"/>
</dbReference>
<dbReference type="Gene3D" id="1.20.5.710">
    <property type="entry name" value="Single helix bin"/>
    <property type="match status" value="1"/>
</dbReference>
<dbReference type="HAMAP" id="MF_00368">
    <property type="entry name" value="Ribosomal_bL12"/>
    <property type="match status" value="1"/>
</dbReference>
<dbReference type="InterPro" id="IPR000206">
    <property type="entry name" value="Ribosomal_bL12"/>
</dbReference>
<dbReference type="InterPro" id="IPR013823">
    <property type="entry name" value="Ribosomal_bL12_C"/>
</dbReference>
<dbReference type="InterPro" id="IPR014719">
    <property type="entry name" value="Ribosomal_bL12_C/ClpS-like"/>
</dbReference>
<dbReference type="InterPro" id="IPR008932">
    <property type="entry name" value="Ribosomal_bL12_oligo"/>
</dbReference>
<dbReference type="InterPro" id="IPR036235">
    <property type="entry name" value="Ribosomal_bL12_oligo_N_sf"/>
</dbReference>
<dbReference type="NCBIfam" id="TIGR00855">
    <property type="entry name" value="L12"/>
    <property type="match status" value="1"/>
</dbReference>
<dbReference type="PANTHER" id="PTHR45987">
    <property type="entry name" value="39S RIBOSOMAL PROTEIN L12"/>
    <property type="match status" value="1"/>
</dbReference>
<dbReference type="PANTHER" id="PTHR45987:SF4">
    <property type="entry name" value="LARGE RIBOSOMAL SUBUNIT PROTEIN BL12M"/>
    <property type="match status" value="1"/>
</dbReference>
<dbReference type="Pfam" id="PF00542">
    <property type="entry name" value="Ribosomal_L12"/>
    <property type="match status" value="1"/>
</dbReference>
<dbReference type="Pfam" id="PF16320">
    <property type="entry name" value="Ribosomal_L12_N"/>
    <property type="match status" value="1"/>
</dbReference>
<dbReference type="SUPFAM" id="SSF54736">
    <property type="entry name" value="ClpS-like"/>
    <property type="match status" value="1"/>
</dbReference>
<dbReference type="SUPFAM" id="SSF48300">
    <property type="entry name" value="Ribosomal protein L7/12, oligomerisation (N-terminal) domain"/>
    <property type="match status" value="1"/>
</dbReference>
<accession>Q9PA85</accession>
<keyword id="KW-0687">Ribonucleoprotein</keyword>
<keyword id="KW-0689">Ribosomal protein</keyword>
<feature type="chain" id="PRO_0000157609" description="Large ribosomal subunit protein bL12">
    <location>
        <begin position="1"/>
        <end position="122"/>
    </location>
</feature>
<organism>
    <name type="scientific">Xylella fastidiosa (strain 9a5c)</name>
    <dbReference type="NCBI Taxonomy" id="160492"/>
    <lineage>
        <taxon>Bacteria</taxon>
        <taxon>Pseudomonadati</taxon>
        <taxon>Pseudomonadota</taxon>
        <taxon>Gammaproteobacteria</taxon>
        <taxon>Lysobacterales</taxon>
        <taxon>Lysobacteraceae</taxon>
        <taxon>Xylella</taxon>
    </lineage>
</organism>
<sequence>MSLTNEKIVEAIAEKSIMEVMELVKAIEDKFGVSAAAPVMVSGSAAAAAPVEEQTEFTVTLKEAGAKKVEVIKAVRAVTGLGLKEAKDLTEAGGILKEAVSKEEAEKVKKELEAAGATVEVK</sequence>
<gene>
    <name evidence="1" type="primary">rplL</name>
    <name type="ordered locus">XF_2634</name>
</gene>
<reference key="1">
    <citation type="journal article" date="2000" name="Nature">
        <title>The genome sequence of the plant pathogen Xylella fastidiosa.</title>
        <authorList>
            <person name="Simpson A.J.G."/>
            <person name="Reinach F.C."/>
            <person name="Arruda P."/>
            <person name="Abreu F.A."/>
            <person name="Acencio M."/>
            <person name="Alvarenga R."/>
            <person name="Alves L.M.C."/>
            <person name="Araya J.E."/>
            <person name="Baia G.S."/>
            <person name="Baptista C.S."/>
            <person name="Barros M.H."/>
            <person name="Bonaccorsi E.D."/>
            <person name="Bordin S."/>
            <person name="Bove J.M."/>
            <person name="Briones M.R.S."/>
            <person name="Bueno M.R.P."/>
            <person name="Camargo A.A."/>
            <person name="Camargo L.E.A."/>
            <person name="Carraro D.M."/>
            <person name="Carrer H."/>
            <person name="Colauto N.B."/>
            <person name="Colombo C."/>
            <person name="Costa F.F."/>
            <person name="Costa M.C.R."/>
            <person name="Costa-Neto C.M."/>
            <person name="Coutinho L.L."/>
            <person name="Cristofani M."/>
            <person name="Dias-Neto E."/>
            <person name="Docena C."/>
            <person name="El-Dorry H."/>
            <person name="Facincani A.P."/>
            <person name="Ferreira A.J.S."/>
            <person name="Ferreira V.C.A."/>
            <person name="Ferro J.A."/>
            <person name="Fraga J.S."/>
            <person name="Franca S.C."/>
            <person name="Franco M.C."/>
            <person name="Frohme M."/>
            <person name="Furlan L.R."/>
            <person name="Garnier M."/>
            <person name="Goldman G.H."/>
            <person name="Goldman M.H.S."/>
            <person name="Gomes S.L."/>
            <person name="Gruber A."/>
            <person name="Ho P.L."/>
            <person name="Hoheisel J.D."/>
            <person name="Junqueira M.L."/>
            <person name="Kemper E.L."/>
            <person name="Kitajima J.P."/>
            <person name="Krieger J.E."/>
            <person name="Kuramae E.E."/>
            <person name="Laigret F."/>
            <person name="Lambais M.R."/>
            <person name="Leite L.C.C."/>
            <person name="Lemos E.G.M."/>
            <person name="Lemos M.V.F."/>
            <person name="Lopes S.A."/>
            <person name="Lopes C.R."/>
            <person name="Machado J.A."/>
            <person name="Machado M.A."/>
            <person name="Madeira A.M.B.N."/>
            <person name="Madeira H.M.F."/>
            <person name="Marino C.L."/>
            <person name="Marques M.V."/>
            <person name="Martins E.A.L."/>
            <person name="Martins E.M.F."/>
            <person name="Matsukuma A.Y."/>
            <person name="Menck C.F.M."/>
            <person name="Miracca E.C."/>
            <person name="Miyaki C.Y."/>
            <person name="Monteiro-Vitorello C.B."/>
            <person name="Moon D.H."/>
            <person name="Nagai M.A."/>
            <person name="Nascimento A.L.T.O."/>
            <person name="Netto L.E.S."/>
            <person name="Nhani A. Jr."/>
            <person name="Nobrega F.G."/>
            <person name="Nunes L.R."/>
            <person name="Oliveira M.A."/>
            <person name="de Oliveira M.C."/>
            <person name="de Oliveira R.C."/>
            <person name="Palmieri D.A."/>
            <person name="Paris A."/>
            <person name="Peixoto B.R."/>
            <person name="Pereira G.A.G."/>
            <person name="Pereira H.A. Jr."/>
            <person name="Pesquero J.B."/>
            <person name="Quaggio R.B."/>
            <person name="Roberto P.G."/>
            <person name="Rodrigues V."/>
            <person name="de Rosa A.J.M."/>
            <person name="de Rosa V.E. Jr."/>
            <person name="de Sa R.G."/>
            <person name="Santelli R.V."/>
            <person name="Sawasaki H.E."/>
            <person name="da Silva A.C.R."/>
            <person name="da Silva A.M."/>
            <person name="da Silva F.R."/>
            <person name="Silva W.A. Jr."/>
            <person name="da Silveira J.F."/>
            <person name="Silvestri M.L.Z."/>
            <person name="Siqueira W.J."/>
            <person name="de Souza A.A."/>
            <person name="de Souza A.P."/>
            <person name="Terenzi M.F."/>
            <person name="Truffi D."/>
            <person name="Tsai S.M."/>
            <person name="Tsuhako M.H."/>
            <person name="Vallada H."/>
            <person name="Van Sluys M.A."/>
            <person name="Verjovski-Almeida S."/>
            <person name="Vettore A.L."/>
            <person name="Zago M.A."/>
            <person name="Zatz M."/>
            <person name="Meidanis J."/>
            <person name="Setubal J.C."/>
        </authorList>
    </citation>
    <scope>NUCLEOTIDE SEQUENCE [LARGE SCALE GENOMIC DNA]</scope>
    <source>
        <strain>9a5c</strain>
    </source>
</reference>
<evidence type="ECO:0000255" key="1">
    <source>
        <dbReference type="HAMAP-Rule" id="MF_00368"/>
    </source>
</evidence>
<evidence type="ECO:0000305" key="2"/>
<comment type="function">
    <text evidence="1">Forms part of the ribosomal stalk which helps the ribosome interact with GTP-bound translation factors. Is thus essential for accurate translation.</text>
</comment>
<comment type="subunit">
    <text evidence="1">Homodimer. Part of the ribosomal stalk of the 50S ribosomal subunit. Forms a multimeric L10(L12)X complex, where L10 forms an elongated spine to which 2 to 4 L12 dimers bind in a sequential fashion. Binds GTP-bound translation factors.</text>
</comment>
<comment type="similarity">
    <text evidence="1">Belongs to the bacterial ribosomal protein bL12 family.</text>
</comment>
<proteinExistence type="inferred from homology"/>
<name>RL7_XYLFA</name>
<protein>
    <recommendedName>
        <fullName evidence="1">Large ribosomal subunit protein bL12</fullName>
    </recommendedName>
    <alternativeName>
        <fullName evidence="2">50S ribosomal protein L7/L12</fullName>
    </alternativeName>
</protein>